<dbReference type="EMBL" id="AE017198">
    <property type="protein sequence ID" value="AAS09146.1"/>
    <property type="molecule type" value="Genomic_DNA"/>
</dbReference>
<dbReference type="RefSeq" id="WP_003647180.1">
    <property type="nucleotide sequence ID" value="NC_005362.1"/>
</dbReference>
<dbReference type="SMR" id="Q74IY5"/>
<dbReference type="GeneID" id="83570243"/>
<dbReference type="KEGG" id="ljo:LJ_1325"/>
<dbReference type="eggNOG" id="COG0828">
    <property type="taxonomic scope" value="Bacteria"/>
</dbReference>
<dbReference type="HOGENOM" id="CLU_159258_3_2_9"/>
<dbReference type="Proteomes" id="UP000000581">
    <property type="component" value="Chromosome"/>
</dbReference>
<dbReference type="GO" id="GO:1990904">
    <property type="term" value="C:ribonucleoprotein complex"/>
    <property type="evidence" value="ECO:0007669"/>
    <property type="project" value="UniProtKB-KW"/>
</dbReference>
<dbReference type="GO" id="GO:0005840">
    <property type="term" value="C:ribosome"/>
    <property type="evidence" value="ECO:0007669"/>
    <property type="project" value="UniProtKB-KW"/>
</dbReference>
<dbReference type="GO" id="GO:0003735">
    <property type="term" value="F:structural constituent of ribosome"/>
    <property type="evidence" value="ECO:0007669"/>
    <property type="project" value="InterPro"/>
</dbReference>
<dbReference type="GO" id="GO:0006412">
    <property type="term" value="P:translation"/>
    <property type="evidence" value="ECO:0007669"/>
    <property type="project" value="UniProtKB-UniRule"/>
</dbReference>
<dbReference type="Gene3D" id="1.20.5.1150">
    <property type="entry name" value="Ribosomal protein S8"/>
    <property type="match status" value="1"/>
</dbReference>
<dbReference type="HAMAP" id="MF_00358">
    <property type="entry name" value="Ribosomal_bS21"/>
    <property type="match status" value="1"/>
</dbReference>
<dbReference type="InterPro" id="IPR001911">
    <property type="entry name" value="Ribosomal_bS21"/>
</dbReference>
<dbReference type="InterPro" id="IPR018278">
    <property type="entry name" value="Ribosomal_bS21_CS"/>
</dbReference>
<dbReference type="InterPro" id="IPR038380">
    <property type="entry name" value="Ribosomal_bS21_sf"/>
</dbReference>
<dbReference type="NCBIfam" id="TIGR00030">
    <property type="entry name" value="S21p"/>
    <property type="match status" value="1"/>
</dbReference>
<dbReference type="PANTHER" id="PTHR21109">
    <property type="entry name" value="MITOCHONDRIAL 28S RIBOSOMAL PROTEIN S21"/>
    <property type="match status" value="1"/>
</dbReference>
<dbReference type="PANTHER" id="PTHR21109:SF22">
    <property type="entry name" value="SMALL RIBOSOMAL SUBUNIT PROTEIN BS21"/>
    <property type="match status" value="1"/>
</dbReference>
<dbReference type="Pfam" id="PF01165">
    <property type="entry name" value="Ribosomal_S21"/>
    <property type="match status" value="1"/>
</dbReference>
<dbReference type="PRINTS" id="PR00976">
    <property type="entry name" value="RIBOSOMALS21"/>
</dbReference>
<dbReference type="PROSITE" id="PS01181">
    <property type="entry name" value="RIBOSOMAL_S21"/>
    <property type="match status" value="1"/>
</dbReference>
<sequence length="58" mass="7068">MAKTIVHENESIDDALRRFKRSVSRSGTLQEYRKREFYEKPSVKRKLKSEAARKRRHY</sequence>
<reference key="1">
    <citation type="journal article" date="2004" name="Proc. Natl. Acad. Sci. U.S.A.">
        <title>The genome sequence of the probiotic intestinal bacterium Lactobacillus johnsonii NCC 533.</title>
        <authorList>
            <person name="Pridmore R.D."/>
            <person name="Berger B."/>
            <person name="Desiere F."/>
            <person name="Vilanova D."/>
            <person name="Barretto C."/>
            <person name="Pittet A.-C."/>
            <person name="Zwahlen M.-C."/>
            <person name="Rouvet M."/>
            <person name="Altermann E."/>
            <person name="Barrangou R."/>
            <person name="Mollet B."/>
            <person name="Mercenier A."/>
            <person name="Klaenhammer T."/>
            <person name="Arigoni F."/>
            <person name="Schell M.A."/>
        </authorList>
    </citation>
    <scope>NUCLEOTIDE SEQUENCE [LARGE SCALE GENOMIC DNA]</scope>
    <source>
        <strain>CNCM I-1225 / La1 / NCC 533</strain>
    </source>
</reference>
<comment type="similarity">
    <text evidence="1">Belongs to the bacterial ribosomal protein bS21 family.</text>
</comment>
<protein>
    <recommendedName>
        <fullName evidence="1">Small ribosomal subunit protein bS21</fullName>
    </recommendedName>
    <alternativeName>
        <fullName evidence="2">30S ribosomal protein S21</fullName>
    </alternativeName>
</protein>
<name>RS21_LACJO</name>
<feature type="chain" id="PRO_0000178344" description="Small ribosomal subunit protein bS21">
    <location>
        <begin position="1"/>
        <end position="58"/>
    </location>
</feature>
<organism>
    <name type="scientific">Lactobacillus johnsonii (strain CNCM I-12250 / La1 / NCC 533)</name>
    <dbReference type="NCBI Taxonomy" id="257314"/>
    <lineage>
        <taxon>Bacteria</taxon>
        <taxon>Bacillati</taxon>
        <taxon>Bacillota</taxon>
        <taxon>Bacilli</taxon>
        <taxon>Lactobacillales</taxon>
        <taxon>Lactobacillaceae</taxon>
        <taxon>Lactobacillus</taxon>
    </lineage>
</organism>
<keyword id="KW-0687">Ribonucleoprotein</keyword>
<keyword id="KW-0689">Ribosomal protein</keyword>
<proteinExistence type="inferred from homology"/>
<evidence type="ECO:0000255" key="1">
    <source>
        <dbReference type="HAMAP-Rule" id="MF_00358"/>
    </source>
</evidence>
<evidence type="ECO:0000305" key="2"/>
<accession>Q74IY5</accession>
<gene>
    <name evidence="1" type="primary">rpsU</name>
    <name type="ordered locus">LJ_1325</name>
</gene>